<reference key="1">
    <citation type="journal article" date="2004" name="J. Bacteriol.">
        <title>Complete genome sequence of the genetically tractable hydrogenotrophic methanogen Methanococcus maripaludis.</title>
        <authorList>
            <person name="Hendrickson E.L."/>
            <person name="Kaul R."/>
            <person name="Zhou Y."/>
            <person name="Bovee D."/>
            <person name="Chapman P."/>
            <person name="Chung J."/>
            <person name="Conway de Macario E."/>
            <person name="Dodsworth J.A."/>
            <person name="Gillett W."/>
            <person name="Graham D.E."/>
            <person name="Hackett M."/>
            <person name="Haydock A.K."/>
            <person name="Kang A."/>
            <person name="Land M.L."/>
            <person name="Levy R."/>
            <person name="Lie T.J."/>
            <person name="Major T.A."/>
            <person name="Moore B.C."/>
            <person name="Porat I."/>
            <person name="Palmeiri A."/>
            <person name="Rouse G."/>
            <person name="Saenphimmachak C."/>
            <person name="Soell D."/>
            <person name="Van Dien S."/>
            <person name="Wang T."/>
            <person name="Whitman W.B."/>
            <person name="Xia Q."/>
            <person name="Zhang Y."/>
            <person name="Larimer F.W."/>
            <person name="Olson M.V."/>
            <person name="Leigh J.A."/>
        </authorList>
    </citation>
    <scope>NUCLEOTIDE SEQUENCE [LARGE SCALE GENOMIC DNA]</scope>
    <source>
        <strain>DSM 14266 / JCM 13030 / NBRC 101832 / S2 / LL</strain>
    </source>
</reference>
<proteinExistence type="inferred from homology"/>
<gene>
    <name evidence="1" type="primary">gatE</name>
    <name type="ordered locus">MMP1265</name>
</gene>
<protein>
    <recommendedName>
        <fullName evidence="1">Glutamyl-tRNA(Gln) amidotransferase subunit E</fullName>
        <shortName evidence="1">Glu-ADT subunit E</shortName>
        <ecNumber evidence="1">6.3.5.-</ecNumber>
    </recommendedName>
</protein>
<feature type="chain" id="PRO_1000025480" description="Glutamyl-tRNA(Gln) amidotransferase subunit E">
    <location>
        <begin position="1"/>
        <end position="631"/>
    </location>
</feature>
<organism>
    <name type="scientific">Methanococcus maripaludis (strain DSM 14266 / JCM 13030 / NBRC 101832 / S2 / LL)</name>
    <dbReference type="NCBI Taxonomy" id="267377"/>
    <lineage>
        <taxon>Archaea</taxon>
        <taxon>Methanobacteriati</taxon>
        <taxon>Methanobacteriota</taxon>
        <taxon>Methanomada group</taxon>
        <taxon>Methanococci</taxon>
        <taxon>Methanococcales</taxon>
        <taxon>Methanococcaceae</taxon>
        <taxon>Methanococcus</taxon>
    </lineage>
</organism>
<evidence type="ECO:0000255" key="1">
    <source>
        <dbReference type="HAMAP-Rule" id="MF_00588"/>
    </source>
</evidence>
<dbReference type="EC" id="6.3.5.-" evidence="1"/>
<dbReference type="EMBL" id="BX950229">
    <property type="protein sequence ID" value="CAF30821.1"/>
    <property type="molecule type" value="Genomic_DNA"/>
</dbReference>
<dbReference type="RefSeq" id="WP_011171209.1">
    <property type="nucleotide sequence ID" value="NC_005791.1"/>
</dbReference>
<dbReference type="SMR" id="Q6LXT2"/>
<dbReference type="STRING" id="267377.MMP1265"/>
<dbReference type="EnsemblBacteria" id="CAF30821">
    <property type="protein sequence ID" value="CAF30821"/>
    <property type="gene ID" value="MMP1265"/>
</dbReference>
<dbReference type="GeneID" id="2761466"/>
<dbReference type="KEGG" id="mmp:MMP1265"/>
<dbReference type="PATRIC" id="fig|267377.15.peg.1298"/>
<dbReference type="eggNOG" id="arCOG01719">
    <property type="taxonomic scope" value="Archaea"/>
</dbReference>
<dbReference type="HOGENOM" id="CLU_030702_0_0_2"/>
<dbReference type="OrthoDB" id="7316at2157"/>
<dbReference type="Proteomes" id="UP000000590">
    <property type="component" value="Chromosome"/>
</dbReference>
<dbReference type="GO" id="GO:0005737">
    <property type="term" value="C:cytoplasm"/>
    <property type="evidence" value="ECO:0007669"/>
    <property type="project" value="InterPro"/>
</dbReference>
<dbReference type="GO" id="GO:0004812">
    <property type="term" value="F:aminoacyl-tRNA ligase activity"/>
    <property type="evidence" value="ECO:0007669"/>
    <property type="project" value="InterPro"/>
</dbReference>
<dbReference type="GO" id="GO:0005524">
    <property type="term" value="F:ATP binding"/>
    <property type="evidence" value="ECO:0007669"/>
    <property type="project" value="UniProtKB-KW"/>
</dbReference>
<dbReference type="GO" id="GO:0050567">
    <property type="term" value="F:glutaminyl-tRNA synthase (glutamine-hydrolyzing) activity"/>
    <property type="evidence" value="ECO:0007669"/>
    <property type="project" value="UniProtKB-UniRule"/>
</dbReference>
<dbReference type="GO" id="GO:0070681">
    <property type="term" value="P:glutaminyl-tRNAGln biosynthesis via transamidation"/>
    <property type="evidence" value="ECO:0007669"/>
    <property type="project" value="TreeGrafter"/>
</dbReference>
<dbReference type="GO" id="GO:0006412">
    <property type="term" value="P:translation"/>
    <property type="evidence" value="ECO:0007669"/>
    <property type="project" value="UniProtKB-UniRule"/>
</dbReference>
<dbReference type="FunFam" id="1.10.10.410:FF:000003">
    <property type="entry name" value="Glutamyl-tRNA(Gln) amidotransferase subunit E"/>
    <property type="match status" value="1"/>
</dbReference>
<dbReference type="FunFam" id="3.30.1360.30:FF:000003">
    <property type="entry name" value="Glutamyl-tRNA(Gln) amidotransferase subunit E"/>
    <property type="match status" value="1"/>
</dbReference>
<dbReference type="Gene3D" id="1.10.10.410">
    <property type="match status" value="1"/>
</dbReference>
<dbReference type="Gene3D" id="3.30.1360.30">
    <property type="entry name" value="GAD-like domain"/>
    <property type="match status" value="1"/>
</dbReference>
<dbReference type="Gene3D" id="1.10.150.380">
    <property type="entry name" value="GatB domain, N-terminal subdomain"/>
    <property type="match status" value="1"/>
</dbReference>
<dbReference type="HAMAP" id="MF_00588">
    <property type="entry name" value="GatE"/>
    <property type="match status" value="1"/>
</dbReference>
<dbReference type="InterPro" id="IPR017959">
    <property type="entry name" value="Asn/Gln-tRNA_amidoTrfase_suB/E"/>
</dbReference>
<dbReference type="InterPro" id="IPR006075">
    <property type="entry name" value="Asn/Gln-tRNA_Trfase_suB/E_cat"/>
</dbReference>
<dbReference type="InterPro" id="IPR018027">
    <property type="entry name" value="Asn/Gln_amidotransferase"/>
</dbReference>
<dbReference type="InterPro" id="IPR003789">
    <property type="entry name" value="Asn/Gln_tRNA_amidoTrase-B-like"/>
</dbReference>
<dbReference type="InterPro" id="IPR004115">
    <property type="entry name" value="GAD-like_sf"/>
</dbReference>
<dbReference type="InterPro" id="IPR029351">
    <property type="entry name" value="GAD_dom"/>
</dbReference>
<dbReference type="InterPro" id="IPR042114">
    <property type="entry name" value="GatB_C_1"/>
</dbReference>
<dbReference type="InterPro" id="IPR023168">
    <property type="entry name" value="GatB_Yqey_C_2"/>
</dbReference>
<dbReference type="InterPro" id="IPR004414">
    <property type="entry name" value="GatE"/>
</dbReference>
<dbReference type="InterPro" id="IPR017958">
    <property type="entry name" value="Gln-tRNA_amidoTrfase_suB_CS"/>
</dbReference>
<dbReference type="InterPro" id="IPR014746">
    <property type="entry name" value="Gln_synth/guanido_kin_cat_dom"/>
</dbReference>
<dbReference type="NCBIfam" id="TIGR00134">
    <property type="entry name" value="gatE_arch"/>
    <property type="match status" value="1"/>
</dbReference>
<dbReference type="NCBIfam" id="NF003107">
    <property type="entry name" value="PRK04028.1"/>
    <property type="match status" value="1"/>
</dbReference>
<dbReference type="PANTHER" id="PTHR11659">
    <property type="entry name" value="GLUTAMYL-TRNA GLN AMIDOTRANSFERASE SUBUNIT B MITOCHONDRIAL AND PROKARYOTIC PET112-RELATED"/>
    <property type="match status" value="1"/>
</dbReference>
<dbReference type="PANTHER" id="PTHR11659:SF2">
    <property type="entry name" value="GLUTAMYL-TRNA(GLN) AMIDOTRANSFERASE SUBUNIT E"/>
    <property type="match status" value="1"/>
</dbReference>
<dbReference type="Pfam" id="PF02938">
    <property type="entry name" value="GAD"/>
    <property type="match status" value="1"/>
</dbReference>
<dbReference type="Pfam" id="PF02934">
    <property type="entry name" value="GatB_N"/>
    <property type="match status" value="1"/>
</dbReference>
<dbReference type="Pfam" id="PF02637">
    <property type="entry name" value="GatB_Yqey"/>
    <property type="match status" value="1"/>
</dbReference>
<dbReference type="SMART" id="SM00845">
    <property type="entry name" value="GatB_Yqey"/>
    <property type="match status" value="1"/>
</dbReference>
<dbReference type="SUPFAM" id="SSF55261">
    <property type="entry name" value="GAD domain-like"/>
    <property type="match status" value="1"/>
</dbReference>
<dbReference type="SUPFAM" id="SSF89095">
    <property type="entry name" value="GatB/YqeY motif"/>
    <property type="match status" value="1"/>
</dbReference>
<dbReference type="SUPFAM" id="SSF55931">
    <property type="entry name" value="Glutamine synthetase/guanido kinase"/>
    <property type="match status" value="1"/>
</dbReference>
<dbReference type="PROSITE" id="PS01234">
    <property type="entry name" value="GATB"/>
    <property type="match status" value="1"/>
</dbReference>
<sequence length="631" mass="71170">MDYDYEKLGLKVGLEIHQQLNTKRKLFCNCPTKIRDDEPHGEIERVLRPSQSEMGHVDKAALLESKKEKKFIYQYYNDTTCLVELDDEPPHDVAPEAVDTALEVSTLMNMKMADEVQIMRKMVIDGSNTSGFQRTMFVSQEGFIETEYGNIGVTSLCLEEDACKKIEDGKDYTKYCVDRLGIPLLEITTEPDITSPKMGKEAARRIGTILRATGKVKRGLGTIRQDVNISIKNGARIEVKGVQNLDLIEKIIENEVTRQISLNEIKEELLKRNAEVVDEIKDITELLKDTESKVLKNALKNKGVIRAILLKGFSGMIGREVQPGRRLGTEFSDRGKVLGGVGGLFHTDELPKYGITEEEVIKLKEYMNCGENDAVILVADKKNKVERALNAVIERAKESMIGIPEETRKALDDGNTSYLRPLPGAARMYPETDVPTITITEEKLEFVRNNLPEMPEEKLVRFVKEYELNEDLAKQMVMSYHVDLFETLSKKYSKIKPTLIATTLEATIKEIKREGLDTDLLTEEHLEELFNGLSEDKMSKEAVPDVIKGFIENPTKKLDEILEIKGMSSMSVEEVESIIEDIINQNISQVNEKGMGAMGLLMGRCMAQLRGKADGKLINTTLQKKLKEKVQ</sequence>
<comment type="function">
    <text evidence="1">Allows the formation of correctly charged Gln-tRNA(Gln) through the transamidation of misacylated Glu-tRNA(Gln) in organisms which lack glutaminyl-tRNA synthetase. The reaction takes place in the presence of glutamine and ATP through an activated gamma-phospho-Glu-tRNA(Gln). The GatDE system is specific for glutamate and does not act on aspartate.</text>
</comment>
<comment type="catalytic activity">
    <reaction evidence="1">
        <text>L-glutamyl-tRNA(Gln) + L-glutamine + ATP + H2O = L-glutaminyl-tRNA(Gln) + L-glutamate + ADP + phosphate + H(+)</text>
        <dbReference type="Rhea" id="RHEA:17521"/>
        <dbReference type="Rhea" id="RHEA-COMP:9681"/>
        <dbReference type="Rhea" id="RHEA-COMP:9684"/>
        <dbReference type="ChEBI" id="CHEBI:15377"/>
        <dbReference type="ChEBI" id="CHEBI:15378"/>
        <dbReference type="ChEBI" id="CHEBI:29985"/>
        <dbReference type="ChEBI" id="CHEBI:30616"/>
        <dbReference type="ChEBI" id="CHEBI:43474"/>
        <dbReference type="ChEBI" id="CHEBI:58359"/>
        <dbReference type="ChEBI" id="CHEBI:78520"/>
        <dbReference type="ChEBI" id="CHEBI:78521"/>
        <dbReference type="ChEBI" id="CHEBI:456216"/>
    </reaction>
</comment>
<comment type="subunit">
    <text evidence="1">Heterodimer of GatD and GatE.</text>
</comment>
<comment type="similarity">
    <text evidence="1">Belongs to the GatB/GatE family. GatE subfamily.</text>
</comment>
<name>GATE_METMP</name>
<accession>Q6LXT2</accession>
<keyword id="KW-0067">ATP-binding</keyword>
<keyword id="KW-0436">Ligase</keyword>
<keyword id="KW-0547">Nucleotide-binding</keyword>
<keyword id="KW-0648">Protein biosynthesis</keyword>
<keyword id="KW-1185">Reference proteome</keyword>